<accession>P27128</accession>
<accession>Q2M7U1</accession>
<reference key="1">
    <citation type="journal article" date="1992" name="J. Bacteriol.">
        <title>Structures of the rfaB, rfaI, rfaJ, and rfaS genes of Escherichia coli K-12 and their roles in assembly of the lipopolysaccharide core.</title>
        <authorList>
            <person name="Pradel E."/>
            <person name="Parker C.T."/>
            <person name="Schnaitman C.A."/>
        </authorList>
    </citation>
    <scope>NUCLEOTIDE SEQUENCE [GENOMIC DNA]</scope>
    <source>
        <strain>K12</strain>
    </source>
</reference>
<reference key="2">
    <citation type="journal article" date="1994" name="Nucleic Acids Res.">
        <title>Analysis of the Escherichia coli genome. V. DNA sequence of the region from 76.0 to 81.5 minutes.</title>
        <authorList>
            <person name="Sofia H.J."/>
            <person name="Burland V."/>
            <person name="Daniels D.L."/>
            <person name="Plunkett G. III"/>
            <person name="Blattner F.R."/>
        </authorList>
    </citation>
    <scope>NUCLEOTIDE SEQUENCE [LARGE SCALE GENOMIC DNA]</scope>
    <source>
        <strain>K12 / MG1655 / ATCC 47076</strain>
    </source>
</reference>
<reference key="3">
    <citation type="journal article" date="1997" name="Science">
        <title>The complete genome sequence of Escherichia coli K-12.</title>
        <authorList>
            <person name="Blattner F.R."/>
            <person name="Plunkett G. III"/>
            <person name="Bloch C.A."/>
            <person name="Perna N.T."/>
            <person name="Burland V."/>
            <person name="Riley M."/>
            <person name="Collado-Vides J."/>
            <person name="Glasner J.D."/>
            <person name="Rode C.K."/>
            <person name="Mayhew G.F."/>
            <person name="Gregor J."/>
            <person name="Davis N.W."/>
            <person name="Kirkpatrick H.A."/>
            <person name="Goeden M.A."/>
            <person name="Rose D.J."/>
            <person name="Mau B."/>
            <person name="Shao Y."/>
        </authorList>
    </citation>
    <scope>NUCLEOTIDE SEQUENCE [LARGE SCALE GENOMIC DNA]</scope>
    <source>
        <strain>K12 / MG1655 / ATCC 47076</strain>
    </source>
</reference>
<reference key="4">
    <citation type="journal article" date="2006" name="Mol. Syst. Biol.">
        <title>Highly accurate genome sequences of Escherichia coli K-12 strains MG1655 and W3110.</title>
        <authorList>
            <person name="Hayashi K."/>
            <person name="Morooka N."/>
            <person name="Yamamoto Y."/>
            <person name="Fujita K."/>
            <person name="Isono K."/>
            <person name="Choi S."/>
            <person name="Ohtsubo E."/>
            <person name="Baba T."/>
            <person name="Wanner B.L."/>
            <person name="Mori H."/>
            <person name="Horiuchi T."/>
        </authorList>
    </citation>
    <scope>NUCLEOTIDE SEQUENCE [LARGE SCALE GENOMIC DNA]</scope>
    <source>
        <strain>K12 / W3110 / ATCC 27325 / DSM 5911</strain>
    </source>
</reference>
<reference key="5">
    <citation type="journal article" date="1998" name="J. Bacteriol.">
        <title>Conserved structural regions involved in the catalytic mechanism of Escherichia coli K-12 WaaO (RfaI).</title>
        <authorList>
            <person name="Shibayama K."/>
            <person name="Ohsuka S."/>
            <person name="Tanaka T."/>
            <person name="Arakawa Y."/>
            <person name="Ohta M."/>
        </authorList>
    </citation>
    <scope>FUNCTION</scope>
    <scope>CATALYTIC ACTIVITY</scope>
    <scope>PATHWAY</scope>
    <scope>DOMAIN</scope>
    <scope>DISRUPTION PHENOTYPE</scope>
    <scope>MUTAGENESIS OF ASP-131; ASP-133; TYR-181; SER-184; ASP-220; ASP-222; TYR-239; TYR-266; THR-270 AND SER-293</scope>
    <source>
        <strain>K12</strain>
    </source>
</reference>
<reference key="6">
    <citation type="journal article" date="2014" name="Biochemistry">
        <title>In vitro assembly of the outer core of the lipopolysaccharide from Escherichia coli K-12 and Salmonella typhimurium.</title>
        <authorList>
            <person name="Qian J."/>
            <person name="Garrett T.A."/>
            <person name="Raetz C.R."/>
        </authorList>
    </citation>
    <scope>FUNCTION</scope>
    <scope>CATALYTIC ACTIVITY</scope>
    <scope>COFACTOR</scope>
    <scope>BIOPHYSICOCHEMICAL PROPERTIES</scope>
    <scope>PATHWAY</scope>
    <source>
        <strain>K12 / W3110 / ATCC 27325 / DSM 5911</strain>
    </source>
</reference>
<organism>
    <name type="scientific">Escherichia coli (strain K12)</name>
    <dbReference type="NCBI Taxonomy" id="83333"/>
    <lineage>
        <taxon>Bacteria</taxon>
        <taxon>Pseudomonadati</taxon>
        <taxon>Pseudomonadota</taxon>
        <taxon>Gammaproteobacteria</taxon>
        <taxon>Enterobacterales</taxon>
        <taxon>Enterobacteriaceae</taxon>
        <taxon>Escherichia</taxon>
    </lineage>
</organism>
<keyword id="KW-0328">Glycosyltransferase</keyword>
<keyword id="KW-0448">Lipopolysaccharide biosynthesis</keyword>
<keyword id="KW-0460">Magnesium</keyword>
<keyword id="KW-0479">Metal-binding</keyword>
<keyword id="KW-1185">Reference proteome</keyword>
<keyword id="KW-0808">Transferase</keyword>
<sequence length="339" mass="39423">MQQVFFQETEFLNSVIDYDHKVETENLCLDIAYGTDKNFLFGCGISIASILKYNEGSRLCFHIFTDYFGDDDRKYFDALALQYKTRIKIYLINGDRLRSLPSTKNWTHAIYFRFVIADYFINKAPKVLYLDADIICQGTIEPLINFSFPDDKVAMVVTEGQADWWEKRAHSLGVAGIAKGYFNSGFLLINTAQWAAQQVSARAIAMLNEPEIIKKITHPDQDVLNMLLADKLIFADIKYNTQFSLNYQLKESFINPVTNDTIFIHYIGPTKPWHDWAWDYPVSQAFMEAKNASPWKNTALLKPNNSNQLRYSAKHMLKKHRYLKGFSNYLFYFIEKIKH</sequence>
<protein>
    <recommendedName>
        <fullName evidence="6">Lipopolysaccharide glucosyltransferase WaaO</fullName>
        <ecNumber evidence="2 3">2.4.1.73</ecNumber>
    </recommendedName>
    <alternativeName>
        <fullName>Lipopolysaccharide alpha-1,3 glucosyltransferase</fullName>
    </alternativeName>
    <alternativeName>
        <fullName>Lipopolysaccharide glucosyltransferase II</fullName>
    </alternativeName>
</protein>
<feature type="chain" id="PRO_0000206064" description="Lipopolysaccharide glucosyltransferase WaaO">
    <location>
        <begin position="1"/>
        <end position="339"/>
    </location>
</feature>
<feature type="short sequence motif" description="DXD 1" evidence="7">
    <location>
        <begin position="131"/>
        <end position="133"/>
    </location>
</feature>
<feature type="short sequence motif" description="DXD 2" evidence="7">
    <location>
        <begin position="220"/>
        <end position="222"/>
    </location>
</feature>
<feature type="binding site" evidence="1">
    <location>
        <begin position="34"/>
        <end position="39"/>
    </location>
    <ligand>
        <name>UDP</name>
        <dbReference type="ChEBI" id="CHEBI:58223"/>
    </ligand>
</feature>
<feature type="binding site" evidence="1">
    <location>
        <begin position="131"/>
        <end position="132"/>
    </location>
    <ligand>
        <name>UDP</name>
        <dbReference type="ChEBI" id="CHEBI:58223"/>
    </ligand>
</feature>
<feature type="binding site" evidence="1">
    <location>
        <position position="131"/>
    </location>
    <ligand>
        <name>Mg(2+)</name>
        <dbReference type="ChEBI" id="CHEBI:18420"/>
    </ligand>
</feature>
<feature type="binding site" evidence="1">
    <location>
        <position position="133"/>
    </location>
    <ligand>
        <name>Mg(2+)</name>
        <dbReference type="ChEBI" id="CHEBI:18420"/>
    </ligand>
</feature>
<feature type="binding site" evidence="1">
    <location>
        <begin position="265"/>
        <end position="271"/>
    </location>
    <ligand>
        <name>UDP</name>
        <dbReference type="ChEBI" id="CHEBI:58223"/>
    </ligand>
</feature>
<feature type="binding site" evidence="1">
    <location>
        <position position="265"/>
    </location>
    <ligand>
        <name>Mg(2+)</name>
        <dbReference type="ChEBI" id="CHEBI:18420"/>
    </ligand>
</feature>
<feature type="mutagenesis site" description="Loss of activity. Cannot complement a deletion mutant." evidence="3">
    <original>D</original>
    <variation>N</variation>
    <location>
        <position position="131"/>
    </location>
</feature>
<feature type="mutagenesis site" description="Loss of activity. Cannot complement a deletion mutant." evidence="3">
    <original>D</original>
    <variation>N</variation>
    <location>
        <position position="133"/>
    </location>
</feature>
<feature type="mutagenesis site" description="Does not affect transferase activity. Can complement a deletion mutant." evidence="3">
    <original>Y</original>
    <variation>A</variation>
    <location>
        <position position="181"/>
    </location>
</feature>
<feature type="mutagenesis site" description="Does not affect transferase activity. Can complement a deletion mutant." evidence="3">
    <original>S</original>
    <variation>C</variation>
    <location>
        <position position="184"/>
    </location>
</feature>
<feature type="mutagenesis site" description="Loss of activity. Cannot complement a deletion mutant." evidence="3">
    <original>D</original>
    <variation>N</variation>
    <location>
        <position position="220"/>
    </location>
</feature>
<feature type="mutagenesis site" description="Loss of activity. Cannot complement a deletion mutant." evidence="3">
    <original>D</original>
    <variation>N</variation>
    <location>
        <position position="222"/>
    </location>
</feature>
<feature type="mutagenesis site" description="Does not affect transferase activity. Can complement a deletion mutant." evidence="3">
    <original>Y</original>
    <variation>A</variation>
    <location>
        <position position="239"/>
    </location>
</feature>
<feature type="mutagenesis site" description="Does not affect transferase activity. Can complement a deletion mutant." evidence="3">
    <original>Y</original>
    <variation>A</variation>
    <location>
        <position position="266"/>
    </location>
</feature>
<feature type="mutagenesis site" description="Does not affect transferase activity. Can complement a deletion mutant." evidence="3">
    <original>T</original>
    <variation>A</variation>
    <location>
        <position position="270"/>
    </location>
</feature>
<feature type="mutagenesis site" description="Does not affect transferase activity. Can complement a deletion mutant." evidence="3">
    <original>S</original>
    <variation>C</variation>
    <location>
        <position position="293"/>
    </location>
</feature>
<proteinExistence type="evidence at protein level"/>
<dbReference type="EC" id="2.4.1.73" evidence="2 3"/>
<dbReference type="EMBL" id="M80599">
    <property type="protein sequence ID" value="AAA24086.1"/>
    <property type="molecule type" value="Genomic_DNA"/>
</dbReference>
<dbReference type="EMBL" id="U00039">
    <property type="protein sequence ID" value="AAB18604.1"/>
    <property type="molecule type" value="Genomic_DNA"/>
</dbReference>
<dbReference type="EMBL" id="U00096">
    <property type="protein sequence ID" value="AAC76651.1"/>
    <property type="molecule type" value="Genomic_DNA"/>
</dbReference>
<dbReference type="EMBL" id="AP009048">
    <property type="protein sequence ID" value="BAE77665.1"/>
    <property type="molecule type" value="Genomic_DNA"/>
</dbReference>
<dbReference type="PIR" id="C42982">
    <property type="entry name" value="C42982"/>
</dbReference>
<dbReference type="RefSeq" id="NP_418084.1">
    <property type="nucleotide sequence ID" value="NC_000913.3"/>
</dbReference>
<dbReference type="RefSeq" id="WP_001188013.1">
    <property type="nucleotide sequence ID" value="NZ_JACEFS010000007.1"/>
</dbReference>
<dbReference type="SMR" id="P27128"/>
<dbReference type="BioGRID" id="4263412">
    <property type="interactions" value="189"/>
</dbReference>
<dbReference type="DIP" id="DIP-10670N"/>
<dbReference type="FunCoup" id="P27128">
    <property type="interactions" value="101"/>
</dbReference>
<dbReference type="IntAct" id="P27128">
    <property type="interactions" value="3"/>
</dbReference>
<dbReference type="STRING" id="511145.b3627"/>
<dbReference type="CAZy" id="GT8">
    <property type="family name" value="Glycosyltransferase Family 8"/>
</dbReference>
<dbReference type="jPOST" id="P27128"/>
<dbReference type="PaxDb" id="511145-b3627"/>
<dbReference type="DNASU" id="948143"/>
<dbReference type="EnsemblBacteria" id="AAC76651">
    <property type="protein sequence ID" value="AAC76651"/>
    <property type="gene ID" value="b3627"/>
</dbReference>
<dbReference type="GeneID" id="948143"/>
<dbReference type="KEGG" id="ecj:JW3602"/>
<dbReference type="KEGG" id="eco:b3627"/>
<dbReference type="KEGG" id="ecoc:C3026_19660"/>
<dbReference type="PATRIC" id="fig|1411691.4.peg.3079"/>
<dbReference type="EchoBASE" id="EB1327"/>
<dbReference type="eggNOG" id="COG1442">
    <property type="taxonomic scope" value="Bacteria"/>
</dbReference>
<dbReference type="HOGENOM" id="CLU_050833_5_0_6"/>
<dbReference type="InParanoid" id="P27128"/>
<dbReference type="OMA" id="TVFLHFC"/>
<dbReference type="OrthoDB" id="9807549at2"/>
<dbReference type="PhylomeDB" id="P27128"/>
<dbReference type="BioCyc" id="EcoCyc:EG11352-MONOMER"/>
<dbReference type="BioCyc" id="MetaCyc:EG11352-MONOMER"/>
<dbReference type="UniPathway" id="UPA00958"/>
<dbReference type="PRO" id="PR:P27128"/>
<dbReference type="Proteomes" id="UP000000625">
    <property type="component" value="Chromosome"/>
</dbReference>
<dbReference type="GO" id="GO:0008918">
    <property type="term" value="F:lipopolysaccharide 3-alpha-galactosyltransferase activity"/>
    <property type="evidence" value="ECO:0007669"/>
    <property type="project" value="UniProtKB-EC"/>
</dbReference>
<dbReference type="GO" id="GO:0047270">
    <property type="term" value="F:lipopolysaccharide glucosyltransferase II activity"/>
    <property type="evidence" value="ECO:0000314"/>
    <property type="project" value="EcoCyc"/>
</dbReference>
<dbReference type="GO" id="GO:0046872">
    <property type="term" value="F:metal ion binding"/>
    <property type="evidence" value="ECO:0007669"/>
    <property type="project" value="UniProtKB-KW"/>
</dbReference>
<dbReference type="GO" id="GO:0009244">
    <property type="term" value="P:lipopolysaccharide core region biosynthetic process"/>
    <property type="evidence" value="ECO:0000315"/>
    <property type="project" value="EcoCyc"/>
</dbReference>
<dbReference type="CDD" id="cd04194">
    <property type="entry name" value="GT8_A4GalT_like"/>
    <property type="match status" value="1"/>
</dbReference>
<dbReference type="Gene3D" id="3.90.550.10">
    <property type="entry name" value="Spore Coat Polysaccharide Biosynthesis Protein SpsA, Chain A"/>
    <property type="match status" value="1"/>
</dbReference>
<dbReference type="InterPro" id="IPR002495">
    <property type="entry name" value="Glyco_trans_8"/>
</dbReference>
<dbReference type="InterPro" id="IPR013645">
    <property type="entry name" value="Glyco_transf_8N"/>
</dbReference>
<dbReference type="InterPro" id="IPR050748">
    <property type="entry name" value="Glycosyltrans_8_dom-fam"/>
</dbReference>
<dbReference type="InterPro" id="IPR029044">
    <property type="entry name" value="Nucleotide-diphossugar_trans"/>
</dbReference>
<dbReference type="NCBIfam" id="NF011718">
    <property type="entry name" value="PRK15171.1"/>
    <property type="match status" value="1"/>
</dbReference>
<dbReference type="PANTHER" id="PTHR13778">
    <property type="entry name" value="GLYCOSYLTRANSFERASE 8 DOMAIN-CONTAINING PROTEIN"/>
    <property type="match status" value="1"/>
</dbReference>
<dbReference type="PANTHER" id="PTHR13778:SF47">
    <property type="entry name" value="LIPOPOLYSACCHARIDE 1,3-GALACTOSYLTRANSFERASE"/>
    <property type="match status" value="1"/>
</dbReference>
<dbReference type="Pfam" id="PF01501">
    <property type="entry name" value="Glyco_transf_8"/>
    <property type="match status" value="1"/>
</dbReference>
<dbReference type="Pfam" id="PF08437">
    <property type="entry name" value="Glyco_transf_8C"/>
    <property type="match status" value="1"/>
</dbReference>
<dbReference type="SUPFAM" id="SSF53448">
    <property type="entry name" value="Nucleotide-diphospho-sugar transferases"/>
    <property type="match status" value="1"/>
</dbReference>
<evidence type="ECO:0000250" key="1">
    <source>
        <dbReference type="UniProtKB" id="A0A0H2URJ6"/>
    </source>
</evidence>
<evidence type="ECO:0000269" key="2">
    <source>
    </source>
</evidence>
<evidence type="ECO:0000269" key="3">
    <source>
    </source>
</evidence>
<evidence type="ECO:0000303" key="4">
    <source>
    </source>
</evidence>
<evidence type="ECO:0000303" key="5">
    <source>
    </source>
</evidence>
<evidence type="ECO:0000305" key="6"/>
<evidence type="ECO:0000305" key="7">
    <source>
    </source>
</evidence>
<comment type="function">
    <text evidence="2 3">Glucosyltransferase involved in the biosynthesis of the core oligosaccharide region of lipopolysaccharide (LPS) (PubMed:24479701, PubMed:9765561). Catalyzes the addition of a second glucose (glucose II) to the first outer-core glucose (glucose I) (PubMed:24479701, PubMed:9765561). In vitro, can add multiple glucose residues to its lipid acceptor (PubMed:24479701). Activity does not require the branched galactose added by WaaB, but it is higher in the presence of this branched galactose (PubMed:24479701). In the absence of a lipid acceptor, can hydrolyze UDP-glucose, but not UDP-galactose (PubMed:24479701).</text>
</comment>
<comment type="catalytic activity">
    <reaction evidence="2 3">
        <text>UDP-glucose + lipopolysaccharide = UDP + alpha-D-glucosyl-lipopolysaccharide.</text>
        <dbReference type="EC" id="2.4.1.73"/>
    </reaction>
</comment>
<comment type="catalytic activity">
    <reaction evidence="2 3">
        <text>alpha-D-Gal-(1-&gt;6)-alpha-D-Glc-(1-&gt;3)-[L-alpha-D-Hep-(1-&gt;7)]-4-O-PO3(2-)-L-alpha-D-Hep-(1-&gt;3)-4-O-PO3(2-)-L-alpha-D-Hep-(1-&gt;5)-[alpha-Kdo-(2-&gt;4)]-alpha-Kdo-(2-&gt;6)-lipid A + UDP-alpha-D-glucose = alpha-D-Glc-(1-&gt;3)-[alpha-D-Gal-(1-&gt;6)]-alpha-D-Glc-(1-&gt;3)-[L-alpha-D-Hep-(1-&gt;7)]-4-O-PO3(2-)-L-alpha-D-Hep-(1-&gt;3)-4-O-PO3(2-)-L-alpha-D-Hep-(1-&gt;5)-[alpha-Kdo-(2-&gt;4)]-alpha-Kdo-(2-&gt;6)-lipid A + UDP + H(+)</text>
        <dbReference type="Rhea" id="RHEA:30003"/>
        <dbReference type="ChEBI" id="CHEBI:15378"/>
        <dbReference type="ChEBI" id="CHEBI:58223"/>
        <dbReference type="ChEBI" id="CHEBI:58885"/>
        <dbReference type="ChEBI" id="CHEBI:62001"/>
        <dbReference type="ChEBI" id="CHEBI:62002"/>
    </reaction>
</comment>
<comment type="cofactor">
    <cofactor evidence="2">
        <name>Mg(2+)</name>
        <dbReference type="ChEBI" id="CHEBI:18420"/>
    </cofactor>
</comment>
<comment type="biophysicochemical properties">
    <kinetics>
        <KM evidence="2">1.95 mM for UDP-glucose (for hydrolysis reaction)</KM>
        <text evidence="2">kcat is 0.013 sec(-1) for UDP-glucose hydrolysis.</text>
    </kinetics>
</comment>
<comment type="pathway">
    <text evidence="2 3">Bacterial outer membrane biogenesis; LPS core biosynthesis.</text>
</comment>
<comment type="domain">
    <text evidence="3">Contains two DXD motifs that may play a crucial role in the catalytic function.</text>
</comment>
<comment type="disruption phenotype">
    <text evidence="3">LPS of the mutant contains one galactose and one glucose unit.</text>
</comment>
<comment type="similarity">
    <text evidence="6">Belongs to the glycosyltransferase 8 family.</text>
</comment>
<name>WAAO_ECOLI</name>
<gene>
    <name evidence="5" type="primary">waaO</name>
    <name evidence="4" type="synonym">rfaI</name>
    <name type="ordered locus">b3627</name>
    <name type="ordered locus">JW3602</name>
</gene>